<evidence type="ECO:0000255" key="1">
    <source>
        <dbReference type="HAMAP-Rule" id="MF_00444"/>
    </source>
</evidence>
<protein>
    <recommendedName>
        <fullName evidence="1">ATP-dependent Clp protease proteolytic subunit</fullName>
        <ecNumber evidence="1">3.4.21.92</ecNumber>
    </recommendedName>
    <alternativeName>
        <fullName evidence="1">Endopeptidase Clp</fullName>
    </alternativeName>
</protein>
<feature type="chain" id="PRO_0000179534" description="ATP-dependent Clp protease proteolytic subunit">
    <location>
        <begin position="1"/>
        <end position="225"/>
    </location>
</feature>
<feature type="active site" description="Nucleophile" evidence="1">
    <location>
        <position position="123"/>
    </location>
</feature>
<feature type="active site" evidence="1">
    <location>
        <position position="148"/>
    </location>
</feature>
<comment type="function">
    <text evidence="1">Cleaves peptides in various proteins in a process that requires ATP hydrolysis. Has a chymotrypsin-like activity. Plays a major role in the degradation of misfolded proteins.</text>
</comment>
<comment type="catalytic activity">
    <reaction evidence="1">
        <text>Hydrolysis of proteins to small peptides in the presence of ATP and magnesium. alpha-casein is the usual test substrate. In the absence of ATP, only oligopeptides shorter than five residues are hydrolyzed (such as succinyl-Leu-Tyr-|-NHMec, and Leu-Tyr-Leu-|-Tyr-Trp, in which cleavage of the -Tyr-|-Leu- and -Tyr-|-Trp bonds also occurs).</text>
        <dbReference type="EC" id="3.4.21.92"/>
    </reaction>
</comment>
<comment type="subunit">
    <text evidence="1">Fourteen ClpP subunits assemble into 2 heptameric rings which stack back to back to give a disk-like structure with a central cavity, resembling the structure of eukaryotic proteasomes.</text>
</comment>
<comment type="subcellular location">
    <subcellularLocation>
        <location evidence="1">Cytoplasm</location>
    </subcellularLocation>
</comment>
<comment type="similarity">
    <text evidence="1">Belongs to the peptidase S14 family.</text>
</comment>
<keyword id="KW-0963">Cytoplasm</keyword>
<keyword id="KW-0378">Hydrolase</keyword>
<keyword id="KW-0645">Protease</keyword>
<keyword id="KW-1185">Reference proteome</keyword>
<keyword id="KW-0720">Serine protease</keyword>
<gene>
    <name evidence="1" type="primary">clpP</name>
    <name type="ordered locus">CT1553</name>
</gene>
<organism>
    <name type="scientific">Chlorobaculum tepidum (strain ATCC 49652 / DSM 12025 / NBRC 103806 / TLS)</name>
    <name type="common">Chlorobium tepidum</name>
    <dbReference type="NCBI Taxonomy" id="194439"/>
    <lineage>
        <taxon>Bacteria</taxon>
        <taxon>Pseudomonadati</taxon>
        <taxon>Chlorobiota</taxon>
        <taxon>Chlorobiia</taxon>
        <taxon>Chlorobiales</taxon>
        <taxon>Chlorobiaceae</taxon>
        <taxon>Chlorobaculum</taxon>
    </lineage>
</organism>
<proteinExistence type="inferred from homology"/>
<name>CLPP_CHLTE</name>
<dbReference type="EC" id="3.4.21.92" evidence="1"/>
<dbReference type="EMBL" id="AE006470">
    <property type="protein sequence ID" value="AAM72778.1"/>
    <property type="molecule type" value="Genomic_DNA"/>
</dbReference>
<dbReference type="RefSeq" id="NP_662436.1">
    <property type="nucleotide sequence ID" value="NC_002932.3"/>
</dbReference>
<dbReference type="RefSeq" id="WP_010933217.1">
    <property type="nucleotide sequence ID" value="NC_002932.3"/>
</dbReference>
<dbReference type="SMR" id="Q8KC73"/>
<dbReference type="STRING" id="194439.CT1553"/>
<dbReference type="MEROPS" id="S14.001"/>
<dbReference type="EnsemblBacteria" id="AAM72778">
    <property type="protein sequence ID" value="AAM72778"/>
    <property type="gene ID" value="CT1553"/>
</dbReference>
<dbReference type="KEGG" id="cte:CT1553"/>
<dbReference type="PATRIC" id="fig|194439.7.peg.1406"/>
<dbReference type="eggNOG" id="COG0740">
    <property type="taxonomic scope" value="Bacteria"/>
</dbReference>
<dbReference type="HOGENOM" id="CLU_058707_3_2_10"/>
<dbReference type="OrthoDB" id="9802800at2"/>
<dbReference type="Proteomes" id="UP000001007">
    <property type="component" value="Chromosome"/>
</dbReference>
<dbReference type="GO" id="GO:0005737">
    <property type="term" value="C:cytoplasm"/>
    <property type="evidence" value="ECO:0007669"/>
    <property type="project" value="UniProtKB-SubCell"/>
</dbReference>
<dbReference type="GO" id="GO:0009368">
    <property type="term" value="C:endopeptidase Clp complex"/>
    <property type="evidence" value="ECO:0007669"/>
    <property type="project" value="TreeGrafter"/>
</dbReference>
<dbReference type="GO" id="GO:0004176">
    <property type="term" value="F:ATP-dependent peptidase activity"/>
    <property type="evidence" value="ECO:0007669"/>
    <property type="project" value="InterPro"/>
</dbReference>
<dbReference type="GO" id="GO:0051117">
    <property type="term" value="F:ATPase binding"/>
    <property type="evidence" value="ECO:0007669"/>
    <property type="project" value="TreeGrafter"/>
</dbReference>
<dbReference type="GO" id="GO:0004252">
    <property type="term" value="F:serine-type endopeptidase activity"/>
    <property type="evidence" value="ECO:0007669"/>
    <property type="project" value="UniProtKB-UniRule"/>
</dbReference>
<dbReference type="GO" id="GO:0006515">
    <property type="term" value="P:protein quality control for misfolded or incompletely synthesized proteins"/>
    <property type="evidence" value="ECO:0007669"/>
    <property type="project" value="TreeGrafter"/>
</dbReference>
<dbReference type="CDD" id="cd07017">
    <property type="entry name" value="S14_ClpP_2"/>
    <property type="match status" value="1"/>
</dbReference>
<dbReference type="FunFam" id="3.90.226.10:FF:000001">
    <property type="entry name" value="ATP-dependent Clp protease proteolytic subunit"/>
    <property type="match status" value="1"/>
</dbReference>
<dbReference type="Gene3D" id="3.90.226.10">
    <property type="entry name" value="2-enoyl-CoA Hydratase, Chain A, domain 1"/>
    <property type="match status" value="1"/>
</dbReference>
<dbReference type="HAMAP" id="MF_00444">
    <property type="entry name" value="ClpP"/>
    <property type="match status" value="1"/>
</dbReference>
<dbReference type="InterPro" id="IPR001907">
    <property type="entry name" value="ClpP"/>
</dbReference>
<dbReference type="InterPro" id="IPR029045">
    <property type="entry name" value="ClpP/crotonase-like_dom_sf"/>
</dbReference>
<dbReference type="InterPro" id="IPR023562">
    <property type="entry name" value="ClpP/TepA"/>
</dbReference>
<dbReference type="InterPro" id="IPR033135">
    <property type="entry name" value="ClpP_His_AS"/>
</dbReference>
<dbReference type="InterPro" id="IPR018215">
    <property type="entry name" value="ClpP_Ser_AS"/>
</dbReference>
<dbReference type="NCBIfam" id="TIGR00493">
    <property type="entry name" value="clpP"/>
    <property type="match status" value="1"/>
</dbReference>
<dbReference type="NCBIfam" id="NF001368">
    <property type="entry name" value="PRK00277.1"/>
    <property type="match status" value="1"/>
</dbReference>
<dbReference type="NCBIfam" id="NF009205">
    <property type="entry name" value="PRK12553.1"/>
    <property type="match status" value="1"/>
</dbReference>
<dbReference type="PANTHER" id="PTHR10381">
    <property type="entry name" value="ATP-DEPENDENT CLP PROTEASE PROTEOLYTIC SUBUNIT"/>
    <property type="match status" value="1"/>
</dbReference>
<dbReference type="PANTHER" id="PTHR10381:SF70">
    <property type="entry name" value="ATP-DEPENDENT CLP PROTEASE PROTEOLYTIC SUBUNIT"/>
    <property type="match status" value="1"/>
</dbReference>
<dbReference type="Pfam" id="PF00574">
    <property type="entry name" value="CLP_protease"/>
    <property type="match status" value="1"/>
</dbReference>
<dbReference type="PRINTS" id="PR00127">
    <property type="entry name" value="CLPPROTEASEP"/>
</dbReference>
<dbReference type="SUPFAM" id="SSF52096">
    <property type="entry name" value="ClpP/crotonase"/>
    <property type="match status" value="1"/>
</dbReference>
<dbReference type="PROSITE" id="PS00382">
    <property type="entry name" value="CLP_PROTEASE_HIS"/>
    <property type="match status" value="1"/>
</dbReference>
<dbReference type="PROSITE" id="PS00381">
    <property type="entry name" value="CLP_PROTEASE_SER"/>
    <property type="match status" value="1"/>
</dbReference>
<accession>Q8KC73</accession>
<sequence>MANINFGFDHHAKKLYSGAIENSINSQLVPMVIETSGRGERAFDIFSRLLRERIIFLGSPIDEHVAGLIIAQLIFLESEDPERDIYIYINSPGGSVSAGLGIYDTMQYIRPDISTVCVGMAASMGAFLLASGTSGKRASLPHSRIMIHQPSGGAQGQETDILIQAREIEKIRHLLEDLLAKHTGQEVSRIREDSERDRWMSAVEAKEYGLIDQIFEKRPAPKSEE</sequence>
<reference key="1">
    <citation type="journal article" date="2002" name="Proc. Natl. Acad. Sci. U.S.A.">
        <title>The complete genome sequence of Chlorobium tepidum TLS, a photosynthetic, anaerobic, green-sulfur bacterium.</title>
        <authorList>
            <person name="Eisen J.A."/>
            <person name="Nelson K.E."/>
            <person name="Paulsen I.T."/>
            <person name="Heidelberg J.F."/>
            <person name="Wu M."/>
            <person name="Dodson R.J."/>
            <person name="DeBoy R.T."/>
            <person name="Gwinn M.L."/>
            <person name="Nelson W.C."/>
            <person name="Haft D.H."/>
            <person name="Hickey E.K."/>
            <person name="Peterson J.D."/>
            <person name="Durkin A.S."/>
            <person name="Kolonay J.F."/>
            <person name="Yang F."/>
            <person name="Holt I.E."/>
            <person name="Umayam L.A."/>
            <person name="Mason T.M."/>
            <person name="Brenner M."/>
            <person name="Shea T.P."/>
            <person name="Parksey D.S."/>
            <person name="Nierman W.C."/>
            <person name="Feldblyum T.V."/>
            <person name="Hansen C.L."/>
            <person name="Craven M.B."/>
            <person name="Radune D."/>
            <person name="Vamathevan J.J."/>
            <person name="Khouri H.M."/>
            <person name="White O."/>
            <person name="Gruber T.M."/>
            <person name="Ketchum K.A."/>
            <person name="Venter J.C."/>
            <person name="Tettelin H."/>
            <person name="Bryant D.A."/>
            <person name="Fraser C.M."/>
        </authorList>
    </citation>
    <scope>NUCLEOTIDE SEQUENCE [LARGE SCALE GENOMIC DNA]</scope>
    <source>
        <strain>ATCC 49652 / DSM 12025 / NBRC 103806 / TLS</strain>
    </source>
</reference>